<reference key="1">
    <citation type="journal article" date="2009" name="J. Bacteriol.">
        <title>Genomic sequencing reveals regulatory mutations and recombinational events in the widely used MC4100 lineage of Escherichia coli K-12.</title>
        <authorList>
            <person name="Ferenci T."/>
            <person name="Zhou Z."/>
            <person name="Betteridge T."/>
            <person name="Ren Y."/>
            <person name="Liu Y."/>
            <person name="Feng L."/>
            <person name="Reeves P.R."/>
            <person name="Wang L."/>
        </authorList>
    </citation>
    <scope>NUCLEOTIDE SEQUENCE [LARGE SCALE GENOMIC DNA]</scope>
    <source>
        <strain>K12 / MC4100 / BW2952</strain>
    </source>
</reference>
<sequence length="216" mass="23578">MSLPMLQVALDNQTMDSAYETTRLIAEEVDIIEVGTILCVGEGVRAVRDLKALYPHKIVLADAKIADAGKILSRMCFEANADWVTVICCADINTAKGALDVAKEFNGDVQIELTGYWTWEQAQQWRDAGIGQVVYHRSRDAQAAGVAWGEADITAIKRLSDMGFKVTVTGGLALEDLPLFKGIPIHVFIAGRSIRDAASPVEAARQFKRSIAELWG</sequence>
<gene>
    <name evidence="1" type="primary">ulaD</name>
    <name type="ordered locus">BWG_3908</name>
</gene>
<organism>
    <name type="scientific">Escherichia coli (strain K12 / MC4100 / BW2952)</name>
    <dbReference type="NCBI Taxonomy" id="595496"/>
    <lineage>
        <taxon>Bacteria</taxon>
        <taxon>Pseudomonadati</taxon>
        <taxon>Pseudomonadota</taxon>
        <taxon>Gammaproteobacteria</taxon>
        <taxon>Enterobacterales</taxon>
        <taxon>Enterobacteriaceae</taxon>
        <taxon>Escherichia</taxon>
    </lineage>
</organism>
<evidence type="ECO:0000255" key="1">
    <source>
        <dbReference type="HAMAP-Rule" id="MF_01267"/>
    </source>
</evidence>
<feature type="chain" id="PRO_1000214148" description="3-keto-L-gulonate-6-phosphate decarboxylase UlaD">
    <location>
        <begin position="1"/>
        <end position="216"/>
    </location>
</feature>
<feature type="binding site" evidence="1">
    <location>
        <position position="11"/>
    </location>
    <ligand>
        <name>substrate</name>
    </ligand>
</feature>
<feature type="binding site" evidence="1">
    <location>
        <position position="33"/>
    </location>
    <ligand>
        <name>Mg(2+)</name>
        <dbReference type="ChEBI" id="CHEBI:18420"/>
    </ligand>
</feature>
<feature type="binding site" evidence="1">
    <location>
        <position position="62"/>
    </location>
    <ligand>
        <name>Mg(2+)</name>
        <dbReference type="ChEBI" id="CHEBI:18420"/>
    </ligand>
</feature>
<feature type="binding site" evidence="1">
    <location>
        <position position="192"/>
    </location>
    <ligand>
        <name>substrate</name>
    </ligand>
</feature>
<feature type="site" description="Transition state stabilizer" evidence="1">
    <location>
        <position position="64"/>
    </location>
</feature>
<feature type="site" description="Transition state stabilizer" evidence="1">
    <location>
        <position position="67"/>
    </location>
</feature>
<name>ULAD_ECOBW</name>
<proteinExistence type="inferred from homology"/>
<dbReference type="EC" id="4.1.1.85" evidence="1"/>
<dbReference type="EMBL" id="CP001396">
    <property type="protein sequence ID" value="ACR61819.1"/>
    <property type="molecule type" value="Genomic_DNA"/>
</dbReference>
<dbReference type="RefSeq" id="WP_000056749.1">
    <property type="nucleotide sequence ID" value="NC_012759.1"/>
</dbReference>
<dbReference type="SMR" id="C4ZR73"/>
<dbReference type="KEGG" id="ebw:BWG_3908"/>
<dbReference type="HOGENOM" id="CLU_081825_0_0_6"/>
<dbReference type="UniPathway" id="UPA00263">
    <property type="reaction ID" value="UER00378"/>
</dbReference>
<dbReference type="GO" id="GO:0033982">
    <property type="term" value="F:3-dehydro-L-gulonate-6-phosphate decarboxylase activity"/>
    <property type="evidence" value="ECO:0007669"/>
    <property type="project" value="UniProtKB-EC"/>
</dbReference>
<dbReference type="GO" id="GO:0000287">
    <property type="term" value="F:magnesium ion binding"/>
    <property type="evidence" value="ECO:0007669"/>
    <property type="project" value="UniProtKB-UniRule"/>
</dbReference>
<dbReference type="GO" id="GO:0004590">
    <property type="term" value="F:orotidine-5'-phosphate decarboxylase activity"/>
    <property type="evidence" value="ECO:0007669"/>
    <property type="project" value="InterPro"/>
</dbReference>
<dbReference type="GO" id="GO:0006207">
    <property type="term" value="P:'de novo' pyrimidine nucleobase biosynthetic process"/>
    <property type="evidence" value="ECO:0007669"/>
    <property type="project" value="InterPro"/>
</dbReference>
<dbReference type="GO" id="GO:0019854">
    <property type="term" value="P:L-ascorbic acid catabolic process"/>
    <property type="evidence" value="ECO:0007669"/>
    <property type="project" value="UniProtKB-UniRule"/>
</dbReference>
<dbReference type="CDD" id="cd04726">
    <property type="entry name" value="KGPDC_HPS"/>
    <property type="match status" value="1"/>
</dbReference>
<dbReference type="FunFam" id="3.20.20.70:FF:000022">
    <property type="entry name" value="3-keto-L-gulonate-6-phosphate decarboxylase UlaD"/>
    <property type="match status" value="1"/>
</dbReference>
<dbReference type="Gene3D" id="3.20.20.70">
    <property type="entry name" value="Aldolase class I"/>
    <property type="match status" value="1"/>
</dbReference>
<dbReference type="HAMAP" id="MF_01267">
    <property type="entry name" value="UlaD"/>
    <property type="match status" value="1"/>
</dbReference>
<dbReference type="InterPro" id="IPR023942">
    <property type="entry name" value="3-keto-L-gulonate6Pdecase_UlaD"/>
</dbReference>
<dbReference type="InterPro" id="IPR013785">
    <property type="entry name" value="Aldolase_TIM"/>
</dbReference>
<dbReference type="InterPro" id="IPR041710">
    <property type="entry name" value="HPS/KGPDC"/>
</dbReference>
<dbReference type="InterPro" id="IPR001754">
    <property type="entry name" value="OMPdeCOase_dom"/>
</dbReference>
<dbReference type="InterPro" id="IPR011060">
    <property type="entry name" value="RibuloseP-bd_barrel"/>
</dbReference>
<dbReference type="NCBIfam" id="NF009832">
    <property type="entry name" value="PRK13306.1"/>
    <property type="match status" value="1"/>
</dbReference>
<dbReference type="PANTHER" id="PTHR35039">
    <property type="entry name" value="3-KETO-L-GULONATE-6-PHOSPHATE DECARBOXYLASE SGBH-RELATED"/>
    <property type="match status" value="1"/>
</dbReference>
<dbReference type="PANTHER" id="PTHR35039:SF3">
    <property type="entry name" value="3-KETO-L-GULONATE-6-PHOSPHATE DECARBOXYLASE SGBH-RELATED"/>
    <property type="match status" value="1"/>
</dbReference>
<dbReference type="Pfam" id="PF00215">
    <property type="entry name" value="OMPdecase"/>
    <property type="match status" value="1"/>
</dbReference>
<dbReference type="SMART" id="SM00934">
    <property type="entry name" value="OMPdecase"/>
    <property type="match status" value="1"/>
</dbReference>
<dbReference type="SUPFAM" id="SSF51366">
    <property type="entry name" value="Ribulose-phoshate binding barrel"/>
    <property type="match status" value="1"/>
</dbReference>
<comment type="function">
    <text evidence="1">Catalyzes the decarboxylation of 3-keto-L-gulonate-6-P into L-xylulose-5-P. Is involved in the anaerobic L-ascorbate utilization.</text>
</comment>
<comment type="catalytic activity">
    <reaction evidence="1">
        <text>3-dehydro-L-gulonate 6-phosphate + H(+) = L-xylulose 5-phosphate + CO2</text>
        <dbReference type="Rhea" id="RHEA:14353"/>
        <dbReference type="ChEBI" id="CHEBI:15378"/>
        <dbReference type="ChEBI" id="CHEBI:16526"/>
        <dbReference type="ChEBI" id="CHEBI:57829"/>
        <dbReference type="ChEBI" id="CHEBI:58774"/>
        <dbReference type="EC" id="4.1.1.85"/>
    </reaction>
</comment>
<comment type="cofactor">
    <cofactor evidence="1">
        <name>Mg(2+)</name>
        <dbReference type="ChEBI" id="CHEBI:18420"/>
    </cofactor>
    <text evidence="1">Binds 1 Mg(2+) ion per subunit.</text>
</comment>
<comment type="pathway">
    <text evidence="1">Cofactor degradation; L-ascorbate degradation; D-xylulose 5-phosphate from L-ascorbate: step 2/4.</text>
</comment>
<comment type="subunit">
    <text evidence="1">Homodimer.</text>
</comment>
<comment type="induction">
    <text evidence="1">Induced by L-ascorbate. Repressed by UlaR.</text>
</comment>
<comment type="similarity">
    <text evidence="1">Belongs to the HPS/KGPDC family. KGPDC subfamily.</text>
</comment>
<accession>C4ZR73</accession>
<keyword id="KW-0119">Carbohydrate metabolism</keyword>
<keyword id="KW-0210">Decarboxylase</keyword>
<keyword id="KW-0456">Lyase</keyword>
<keyword id="KW-0460">Magnesium</keyword>
<keyword id="KW-0479">Metal-binding</keyword>
<protein>
    <recommendedName>
        <fullName evidence="1">3-keto-L-gulonate-6-phosphate decarboxylase UlaD</fullName>
        <ecNumber evidence="1">4.1.1.85</ecNumber>
    </recommendedName>
    <alternativeName>
        <fullName evidence="1">3-dehydro-L-gulonate-6-phosphate decarboxylase</fullName>
    </alternativeName>
    <alternativeName>
        <fullName evidence="1">KGPDC</fullName>
    </alternativeName>
    <alternativeName>
        <fullName evidence="1">L-ascorbate utilization protein D</fullName>
    </alternativeName>
</protein>